<dbReference type="EC" id="3.1.1.11"/>
<dbReference type="EMBL" id="AC068809">
    <property type="status" value="NOT_ANNOTATED_CDS"/>
    <property type="molecule type" value="Genomic_DNA"/>
</dbReference>
<dbReference type="EMBL" id="CP002688">
    <property type="protein sequence ID" value="AED92636.1"/>
    <property type="molecule type" value="Genomic_DNA"/>
</dbReference>
<dbReference type="RefSeq" id="NP_197400.1">
    <property type="nucleotide sequence ID" value="NM_121904.2"/>
</dbReference>
<dbReference type="SMR" id="Q3E9D3"/>
<dbReference type="FunCoup" id="Q3E9D3">
    <property type="interactions" value="69"/>
</dbReference>
<dbReference type="STRING" id="3702.Q3E9D3"/>
<dbReference type="GlyCosmos" id="Q3E9D3">
    <property type="glycosylation" value="4 sites, No reported glycans"/>
</dbReference>
<dbReference type="GlyGen" id="Q3E9D3">
    <property type="glycosylation" value="4 sites"/>
</dbReference>
<dbReference type="PaxDb" id="3702-AT5G18990.1"/>
<dbReference type="EnsemblPlants" id="AT5G18990.1">
    <property type="protein sequence ID" value="AT5G18990.1"/>
    <property type="gene ID" value="AT5G18990"/>
</dbReference>
<dbReference type="GeneID" id="832017"/>
<dbReference type="Gramene" id="AT5G18990.1">
    <property type="protein sequence ID" value="AT5G18990.1"/>
    <property type="gene ID" value="AT5G18990"/>
</dbReference>
<dbReference type="KEGG" id="ath:AT5G18990"/>
<dbReference type="Araport" id="AT5G18990"/>
<dbReference type="TAIR" id="AT5G18990"/>
<dbReference type="eggNOG" id="ENOG502QVK0">
    <property type="taxonomic scope" value="Eukaryota"/>
</dbReference>
<dbReference type="HOGENOM" id="CLU_012243_3_0_1"/>
<dbReference type="InParanoid" id="Q3E9D3"/>
<dbReference type="OMA" id="PINNTHW"/>
<dbReference type="OrthoDB" id="2019149at2759"/>
<dbReference type="PhylomeDB" id="Q3E9D3"/>
<dbReference type="BioCyc" id="ARA:AT5G18990-MONOMER"/>
<dbReference type="UniPathway" id="UPA00545">
    <property type="reaction ID" value="UER00823"/>
</dbReference>
<dbReference type="PRO" id="PR:Q3E9D3"/>
<dbReference type="Proteomes" id="UP000006548">
    <property type="component" value="Chromosome 5"/>
</dbReference>
<dbReference type="ExpressionAtlas" id="Q3E9D3">
    <property type="expression patterns" value="baseline and differential"/>
</dbReference>
<dbReference type="GO" id="GO:0005576">
    <property type="term" value="C:extracellular region"/>
    <property type="evidence" value="ECO:0007669"/>
    <property type="project" value="UniProtKB-KW"/>
</dbReference>
<dbReference type="GO" id="GO:0030599">
    <property type="term" value="F:pectinesterase activity"/>
    <property type="evidence" value="ECO:0007669"/>
    <property type="project" value="UniProtKB-EC"/>
</dbReference>
<dbReference type="GO" id="GO:0042545">
    <property type="term" value="P:cell wall modification"/>
    <property type="evidence" value="ECO:0007669"/>
    <property type="project" value="InterPro"/>
</dbReference>
<dbReference type="GO" id="GO:0045490">
    <property type="term" value="P:pectin catabolic process"/>
    <property type="evidence" value="ECO:0007669"/>
    <property type="project" value="UniProtKB-UniPathway"/>
</dbReference>
<dbReference type="FunFam" id="2.160.20.10:FF:000013">
    <property type="entry name" value="Pectinesterase"/>
    <property type="match status" value="1"/>
</dbReference>
<dbReference type="Gene3D" id="2.160.20.10">
    <property type="entry name" value="Single-stranded right-handed beta-helix, Pectin lyase-like"/>
    <property type="match status" value="1"/>
</dbReference>
<dbReference type="InterPro" id="IPR012334">
    <property type="entry name" value="Pectin_lyas_fold"/>
</dbReference>
<dbReference type="InterPro" id="IPR011050">
    <property type="entry name" value="Pectin_lyase_fold/virulence"/>
</dbReference>
<dbReference type="InterPro" id="IPR000070">
    <property type="entry name" value="Pectinesterase_cat"/>
</dbReference>
<dbReference type="PANTHER" id="PTHR31321">
    <property type="entry name" value="ACYL-COA THIOESTER HYDROLASE YBHC-RELATED"/>
    <property type="match status" value="1"/>
</dbReference>
<dbReference type="PANTHER" id="PTHR31321:SF76">
    <property type="entry name" value="PECTINESTERASE 10-RELATED"/>
    <property type="match status" value="1"/>
</dbReference>
<dbReference type="Pfam" id="PF01095">
    <property type="entry name" value="Pectinesterase"/>
    <property type="match status" value="1"/>
</dbReference>
<dbReference type="SUPFAM" id="SSF51126">
    <property type="entry name" value="Pectin lyase-like"/>
    <property type="match status" value="1"/>
</dbReference>
<accession>Q3E9D3</accession>
<keyword id="KW-0063">Aspartyl esterase</keyword>
<keyword id="KW-0134">Cell wall</keyword>
<keyword id="KW-0961">Cell wall biogenesis/degradation</keyword>
<keyword id="KW-0325">Glycoprotein</keyword>
<keyword id="KW-0378">Hydrolase</keyword>
<keyword id="KW-1185">Reference proteome</keyword>
<keyword id="KW-0964">Secreted</keyword>
<keyword id="KW-0732">Signal</keyword>
<protein>
    <recommendedName>
        <fullName>Probable pectinesterase 55</fullName>
        <shortName>PE 55</shortName>
        <ecNumber>3.1.1.11</ecNumber>
    </recommendedName>
    <alternativeName>
        <fullName>Pectin methylesterase 55</fullName>
        <shortName>AtPME55</shortName>
    </alternativeName>
</protein>
<organism>
    <name type="scientific">Arabidopsis thaliana</name>
    <name type="common">Mouse-ear cress</name>
    <dbReference type="NCBI Taxonomy" id="3702"/>
    <lineage>
        <taxon>Eukaryota</taxon>
        <taxon>Viridiplantae</taxon>
        <taxon>Streptophyta</taxon>
        <taxon>Embryophyta</taxon>
        <taxon>Tracheophyta</taxon>
        <taxon>Spermatophyta</taxon>
        <taxon>Magnoliopsida</taxon>
        <taxon>eudicotyledons</taxon>
        <taxon>Gunneridae</taxon>
        <taxon>Pentapetalae</taxon>
        <taxon>rosids</taxon>
        <taxon>malvids</taxon>
        <taxon>Brassicales</taxon>
        <taxon>Brassicaceae</taxon>
        <taxon>Camelineae</taxon>
        <taxon>Arabidopsis</taxon>
    </lineage>
</organism>
<name>PME55_ARATH</name>
<sequence>MGTHRIILGLAALCCFCLPHLIEAKPFEVIVDQSGHGNFTTIQKAIDSVPINNTHWFFINVKAGLYREKITIPQKKPFIVIVGAGKRSTRVEWDDHASLAQSPTFATLADNTVVKKITFANSYNFPSNGKINKNPRVPAVAAFIGGDKSAFYSVGFAGIQDTLWDSDGRHYFHRCTIQGAVDFILGSGQSIYQSCVIQVLGGQLGPGVTGYITAQGRTNANDANGFVFINCLVHGFGKAYLGRAWRPYSRVIFYNSNLTDVVDPLGWWEWNYQGYEKQLTYAEHGCFGSGSNTSRRAKWVKKLSASAVQHLADLSFINRGGWVEDLPIRV</sequence>
<comment type="function">
    <text evidence="1">Acts in the modification of cell walls via demethylesterification of cell wall pectin.</text>
</comment>
<comment type="catalytic activity">
    <reaction>
        <text>[(1-&gt;4)-alpha-D-galacturonosyl methyl ester](n) + n H2O = [(1-&gt;4)-alpha-D-galacturonosyl](n) + n methanol + n H(+)</text>
        <dbReference type="Rhea" id="RHEA:22380"/>
        <dbReference type="Rhea" id="RHEA-COMP:14570"/>
        <dbReference type="Rhea" id="RHEA-COMP:14573"/>
        <dbReference type="ChEBI" id="CHEBI:15377"/>
        <dbReference type="ChEBI" id="CHEBI:15378"/>
        <dbReference type="ChEBI" id="CHEBI:17790"/>
        <dbReference type="ChEBI" id="CHEBI:140522"/>
        <dbReference type="ChEBI" id="CHEBI:140523"/>
        <dbReference type="EC" id="3.1.1.11"/>
    </reaction>
</comment>
<comment type="pathway">
    <text>Glycan metabolism; pectin degradation; 2-dehydro-3-deoxy-D-gluconate from pectin: step 1/5.</text>
</comment>
<comment type="subcellular location">
    <subcellularLocation>
        <location evidence="1">Secreted</location>
        <location evidence="1">Cell wall</location>
    </subcellularLocation>
</comment>
<comment type="similarity">
    <text evidence="3">Belongs to the pectinesterase family.</text>
</comment>
<reference key="1">
    <citation type="journal article" date="2000" name="Nature">
        <title>Sequence and analysis of chromosome 5 of the plant Arabidopsis thaliana.</title>
        <authorList>
            <person name="Tabata S."/>
            <person name="Kaneko T."/>
            <person name="Nakamura Y."/>
            <person name="Kotani H."/>
            <person name="Kato T."/>
            <person name="Asamizu E."/>
            <person name="Miyajima N."/>
            <person name="Sasamoto S."/>
            <person name="Kimura T."/>
            <person name="Hosouchi T."/>
            <person name="Kawashima K."/>
            <person name="Kohara M."/>
            <person name="Matsumoto M."/>
            <person name="Matsuno A."/>
            <person name="Muraki A."/>
            <person name="Nakayama S."/>
            <person name="Nakazaki N."/>
            <person name="Naruo K."/>
            <person name="Okumura S."/>
            <person name="Shinpo S."/>
            <person name="Takeuchi C."/>
            <person name="Wada T."/>
            <person name="Watanabe A."/>
            <person name="Yamada M."/>
            <person name="Yasuda M."/>
            <person name="Sato S."/>
            <person name="de la Bastide M."/>
            <person name="Huang E."/>
            <person name="Spiegel L."/>
            <person name="Gnoj L."/>
            <person name="O'Shaughnessy A."/>
            <person name="Preston R."/>
            <person name="Habermann K."/>
            <person name="Murray J."/>
            <person name="Johnson D."/>
            <person name="Rohlfing T."/>
            <person name="Nelson J."/>
            <person name="Stoneking T."/>
            <person name="Pepin K."/>
            <person name="Spieth J."/>
            <person name="Sekhon M."/>
            <person name="Armstrong J."/>
            <person name="Becker M."/>
            <person name="Belter E."/>
            <person name="Cordum H."/>
            <person name="Cordes M."/>
            <person name="Courtney L."/>
            <person name="Courtney W."/>
            <person name="Dante M."/>
            <person name="Du H."/>
            <person name="Edwards J."/>
            <person name="Fryman J."/>
            <person name="Haakensen B."/>
            <person name="Lamar E."/>
            <person name="Latreille P."/>
            <person name="Leonard S."/>
            <person name="Meyer R."/>
            <person name="Mulvaney E."/>
            <person name="Ozersky P."/>
            <person name="Riley A."/>
            <person name="Strowmatt C."/>
            <person name="Wagner-McPherson C."/>
            <person name="Wollam A."/>
            <person name="Yoakum M."/>
            <person name="Bell M."/>
            <person name="Dedhia N."/>
            <person name="Parnell L."/>
            <person name="Shah R."/>
            <person name="Rodriguez M."/>
            <person name="Hoon See L."/>
            <person name="Vil D."/>
            <person name="Baker J."/>
            <person name="Kirchoff K."/>
            <person name="Toth K."/>
            <person name="King L."/>
            <person name="Bahret A."/>
            <person name="Miller B."/>
            <person name="Marra M.A."/>
            <person name="Martienssen R."/>
            <person name="McCombie W.R."/>
            <person name="Wilson R.K."/>
            <person name="Murphy G."/>
            <person name="Bancroft I."/>
            <person name="Volckaert G."/>
            <person name="Wambutt R."/>
            <person name="Duesterhoeft A."/>
            <person name="Stiekema W."/>
            <person name="Pohl T."/>
            <person name="Entian K.-D."/>
            <person name="Terryn N."/>
            <person name="Hartley N."/>
            <person name="Bent E."/>
            <person name="Johnson S."/>
            <person name="Langham S.-A."/>
            <person name="McCullagh B."/>
            <person name="Robben J."/>
            <person name="Grymonprez B."/>
            <person name="Zimmermann W."/>
            <person name="Ramsperger U."/>
            <person name="Wedler H."/>
            <person name="Balke K."/>
            <person name="Wedler E."/>
            <person name="Peters S."/>
            <person name="van Staveren M."/>
            <person name="Dirkse W."/>
            <person name="Mooijman P."/>
            <person name="Klein Lankhorst R."/>
            <person name="Weitzenegger T."/>
            <person name="Bothe G."/>
            <person name="Rose M."/>
            <person name="Hauf J."/>
            <person name="Berneiser S."/>
            <person name="Hempel S."/>
            <person name="Feldpausch M."/>
            <person name="Lamberth S."/>
            <person name="Villarroel R."/>
            <person name="Gielen J."/>
            <person name="Ardiles W."/>
            <person name="Bents O."/>
            <person name="Lemcke K."/>
            <person name="Kolesov G."/>
            <person name="Mayer K.F.X."/>
            <person name="Rudd S."/>
            <person name="Schoof H."/>
            <person name="Schueller C."/>
            <person name="Zaccaria P."/>
            <person name="Mewes H.-W."/>
            <person name="Bevan M."/>
            <person name="Fransz P.F."/>
        </authorList>
    </citation>
    <scope>NUCLEOTIDE SEQUENCE [LARGE SCALE GENOMIC DNA]</scope>
    <source>
        <strain>cv. Columbia</strain>
    </source>
</reference>
<reference key="2">
    <citation type="journal article" date="2017" name="Plant J.">
        <title>Araport11: a complete reannotation of the Arabidopsis thaliana reference genome.</title>
        <authorList>
            <person name="Cheng C.Y."/>
            <person name="Krishnakumar V."/>
            <person name="Chan A.P."/>
            <person name="Thibaud-Nissen F."/>
            <person name="Schobel S."/>
            <person name="Town C.D."/>
        </authorList>
    </citation>
    <scope>GENOME REANNOTATION</scope>
    <source>
        <strain>cv. Columbia</strain>
    </source>
</reference>
<reference key="3">
    <citation type="journal article" date="2004" name="Carbohydr. Res.">
        <title>Pectin methylesterases: sequence-structural features and phylogenetic relationships.</title>
        <authorList>
            <person name="Markovic O."/>
            <person name="Janecek S."/>
        </authorList>
    </citation>
    <scope>GENE FAMILY</scope>
    <scope>NOMENCLATURE</scope>
</reference>
<evidence type="ECO:0000250" key="1"/>
<evidence type="ECO:0000255" key="2"/>
<evidence type="ECO:0000305" key="3"/>
<proteinExistence type="evidence at transcript level"/>
<feature type="signal peptide" evidence="2">
    <location>
        <begin position="1"/>
        <end position="24"/>
    </location>
</feature>
<feature type="chain" id="PRO_0000371703" description="Probable pectinesterase 55">
    <location>
        <begin position="25"/>
        <end position="330"/>
    </location>
</feature>
<feature type="active site" description="Proton donor" evidence="1">
    <location>
        <position position="161"/>
    </location>
</feature>
<feature type="active site" description="Nucleophile" evidence="1">
    <location>
        <position position="182"/>
    </location>
</feature>
<feature type="binding site" evidence="1">
    <location>
        <position position="243"/>
    </location>
    <ligand>
        <name>substrate</name>
    </ligand>
</feature>
<feature type="binding site" evidence="1">
    <location>
        <position position="245"/>
    </location>
    <ligand>
        <name>substrate</name>
    </ligand>
</feature>
<feature type="site" description="Transition state stabilizer" evidence="1">
    <location>
        <position position="160"/>
    </location>
</feature>
<feature type="glycosylation site" description="N-linked (GlcNAc...) asparagine" evidence="2">
    <location>
        <position position="38"/>
    </location>
</feature>
<feature type="glycosylation site" description="N-linked (GlcNAc...) asparagine" evidence="2">
    <location>
        <position position="52"/>
    </location>
</feature>
<feature type="glycosylation site" description="N-linked (GlcNAc...) asparagine" evidence="2">
    <location>
        <position position="257"/>
    </location>
</feature>
<feature type="glycosylation site" description="N-linked (GlcNAc...) asparagine" evidence="2">
    <location>
        <position position="292"/>
    </location>
</feature>
<gene>
    <name type="primary">PME55</name>
    <name type="synonym">ARATH55</name>
    <name type="ordered locus">At5g18990</name>
    <name type="ORF">T16G12.30</name>
</gene>